<protein>
    <recommendedName>
        <fullName>ESX-2 secretion system protein EccA2</fullName>
    </recommendedName>
    <alternativeName>
        <fullName>ESX conserved component A2</fullName>
    </alternativeName>
    <alternativeName>
        <fullName>Type VII secretion system protein EccA2</fullName>
        <shortName>T7SS protein EccA2</shortName>
    </alternativeName>
</protein>
<accession>P9WPH7</accession>
<accession>L0TDU9</accession>
<accession>O05460</accession>
<feature type="chain" id="PRO_0000063051" description="ESX-2 secretion system protein EccA2">
    <location>
        <begin position="1"/>
        <end position="619"/>
    </location>
</feature>
<feature type="binding site" evidence="2">
    <location>
        <begin position="373"/>
        <end position="380"/>
    </location>
    <ligand>
        <name>ATP</name>
        <dbReference type="ChEBI" id="CHEBI:30616"/>
    </ligand>
</feature>
<keyword id="KW-0067">ATP-binding</keyword>
<keyword id="KW-0963">Cytoplasm</keyword>
<keyword id="KW-0547">Nucleotide-binding</keyword>
<keyword id="KW-1185">Reference proteome</keyword>
<dbReference type="EMBL" id="AL123456">
    <property type="protein sequence ID" value="CCP46713.1"/>
    <property type="molecule type" value="Genomic_DNA"/>
</dbReference>
<dbReference type="PIR" id="E70597">
    <property type="entry name" value="E70597"/>
</dbReference>
<dbReference type="RefSeq" id="NP_218401.1">
    <property type="nucleotide sequence ID" value="NC_000962.3"/>
</dbReference>
<dbReference type="RefSeq" id="WP_003907154.1">
    <property type="nucleotide sequence ID" value="NZ_NVQJ01000082.1"/>
</dbReference>
<dbReference type="SMR" id="P9WPH7"/>
<dbReference type="STRING" id="83332.Rv3884c"/>
<dbReference type="PaxDb" id="83332-Rv3884c"/>
<dbReference type="DNASU" id="886210"/>
<dbReference type="GeneID" id="886210"/>
<dbReference type="KEGG" id="mtu:Rv3884c"/>
<dbReference type="KEGG" id="mtv:RVBD_3884c"/>
<dbReference type="TubercuList" id="Rv3884c"/>
<dbReference type="eggNOG" id="COG0464">
    <property type="taxonomic scope" value="Bacteria"/>
</dbReference>
<dbReference type="InParanoid" id="P9WPH7"/>
<dbReference type="OrthoDB" id="9806903at2"/>
<dbReference type="PhylomeDB" id="P9WPH7"/>
<dbReference type="Proteomes" id="UP000001584">
    <property type="component" value="Chromosome"/>
</dbReference>
<dbReference type="GO" id="GO:0005737">
    <property type="term" value="C:cytoplasm"/>
    <property type="evidence" value="ECO:0007669"/>
    <property type="project" value="UniProtKB-SubCell"/>
</dbReference>
<dbReference type="GO" id="GO:0005524">
    <property type="term" value="F:ATP binding"/>
    <property type="evidence" value="ECO:0007669"/>
    <property type="project" value="UniProtKB-KW"/>
</dbReference>
<dbReference type="GO" id="GO:0016887">
    <property type="term" value="F:ATP hydrolysis activity"/>
    <property type="evidence" value="ECO:0000318"/>
    <property type="project" value="GO_Central"/>
</dbReference>
<dbReference type="CDD" id="cd00009">
    <property type="entry name" value="AAA"/>
    <property type="match status" value="1"/>
</dbReference>
<dbReference type="FunFam" id="1.10.8.60:FF:000203">
    <property type="entry name" value="ESX-2 secretion system protein EccA2"/>
    <property type="match status" value="1"/>
</dbReference>
<dbReference type="FunFam" id="3.40.50.300:FF:001778">
    <property type="entry name" value="Type VII secretion AAA-ATPase EccA"/>
    <property type="match status" value="1"/>
</dbReference>
<dbReference type="Gene3D" id="1.10.8.60">
    <property type="match status" value="1"/>
</dbReference>
<dbReference type="Gene3D" id="3.40.50.300">
    <property type="entry name" value="P-loop containing nucleotide triphosphate hydrolases"/>
    <property type="match status" value="1"/>
</dbReference>
<dbReference type="Gene3D" id="1.25.40.10">
    <property type="entry name" value="Tetratricopeptide repeat domain"/>
    <property type="match status" value="1"/>
</dbReference>
<dbReference type="InterPro" id="IPR003593">
    <property type="entry name" value="AAA+_ATPase"/>
</dbReference>
<dbReference type="InterPro" id="IPR041627">
    <property type="entry name" value="AAA_lid_6"/>
</dbReference>
<dbReference type="InterPro" id="IPR003959">
    <property type="entry name" value="ATPase_AAA_core"/>
</dbReference>
<dbReference type="InterPro" id="IPR000641">
    <property type="entry name" value="CbxX/CfxQ"/>
</dbReference>
<dbReference type="InterPro" id="IPR050773">
    <property type="entry name" value="CbxX/CfxQ_RuBisCO_ESX"/>
</dbReference>
<dbReference type="InterPro" id="IPR027417">
    <property type="entry name" value="P-loop_NTPase"/>
</dbReference>
<dbReference type="InterPro" id="IPR023835">
    <property type="entry name" value="T7SS_EccA"/>
</dbReference>
<dbReference type="InterPro" id="IPR049078">
    <property type="entry name" value="T7SS_EccA1-like_N"/>
</dbReference>
<dbReference type="InterPro" id="IPR011990">
    <property type="entry name" value="TPR-like_helical_dom_sf"/>
</dbReference>
<dbReference type="NCBIfam" id="TIGR03922">
    <property type="entry name" value="T7SS_EccA"/>
    <property type="match status" value="1"/>
</dbReference>
<dbReference type="PANTHER" id="PTHR43392">
    <property type="entry name" value="AAA-TYPE ATPASE FAMILY PROTEIN / ANKYRIN REPEAT FAMILY PROTEIN"/>
    <property type="match status" value="1"/>
</dbReference>
<dbReference type="PANTHER" id="PTHR43392:SF2">
    <property type="entry name" value="AAA-TYPE ATPASE FAMILY PROTEIN _ ANKYRIN REPEAT FAMILY PROTEIN"/>
    <property type="match status" value="1"/>
</dbReference>
<dbReference type="Pfam" id="PF00004">
    <property type="entry name" value="AAA"/>
    <property type="match status" value="1"/>
</dbReference>
<dbReference type="Pfam" id="PF17866">
    <property type="entry name" value="AAA_lid_6"/>
    <property type="match status" value="1"/>
</dbReference>
<dbReference type="Pfam" id="PF21545">
    <property type="entry name" value="T7SS_EccA1_N"/>
    <property type="match status" value="1"/>
</dbReference>
<dbReference type="PRINTS" id="PR00819">
    <property type="entry name" value="CBXCFQXSUPER"/>
</dbReference>
<dbReference type="SMART" id="SM00382">
    <property type="entry name" value="AAA"/>
    <property type="match status" value="1"/>
</dbReference>
<dbReference type="SUPFAM" id="SSF52540">
    <property type="entry name" value="P-loop containing nucleoside triphosphate hydrolases"/>
    <property type="match status" value="1"/>
</dbReference>
<reference key="1">
    <citation type="journal article" date="1998" name="Nature">
        <title>Deciphering the biology of Mycobacterium tuberculosis from the complete genome sequence.</title>
        <authorList>
            <person name="Cole S.T."/>
            <person name="Brosch R."/>
            <person name="Parkhill J."/>
            <person name="Garnier T."/>
            <person name="Churcher C.M."/>
            <person name="Harris D.E."/>
            <person name="Gordon S.V."/>
            <person name="Eiglmeier K."/>
            <person name="Gas S."/>
            <person name="Barry C.E. III"/>
            <person name="Tekaia F."/>
            <person name="Badcock K."/>
            <person name="Basham D."/>
            <person name="Brown D."/>
            <person name="Chillingworth T."/>
            <person name="Connor R."/>
            <person name="Davies R.M."/>
            <person name="Devlin K."/>
            <person name="Feltwell T."/>
            <person name="Gentles S."/>
            <person name="Hamlin N."/>
            <person name="Holroyd S."/>
            <person name="Hornsby T."/>
            <person name="Jagels K."/>
            <person name="Krogh A."/>
            <person name="McLean J."/>
            <person name="Moule S."/>
            <person name="Murphy L.D."/>
            <person name="Oliver S."/>
            <person name="Osborne J."/>
            <person name="Quail M.A."/>
            <person name="Rajandream M.A."/>
            <person name="Rogers J."/>
            <person name="Rutter S."/>
            <person name="Seeger K."/>
            <person name="Skelton S."/>
            <person name="Squares S."/>
            <person name="Squares R."/>
            <person name="Sulston J.E."/>
            <person name="Taylor K."/>
            <person name="Whitehead S."/>
            <person name="Barrell B.G."/>
        </authorList>
    </citation>
    <scope>NUCLEOTIDE SEQUENCE [LARGE SCALE GENOMIC DNA]</scope>
    <source>
        <strain>ATCC 25618 / H37Rv</strain>
    </source>
</reference>
<reference key="2">
    <citation type="journal article" date="2009" name="PLoS Pathog.">
        <title>Systematic genetic nomenclature for type VII secretion systems.</title>
        <authorList>
            <person name="Bitter W."/>
            <person name="Houben E.N."/>
            <person name="Bottai D."/>
            <person name="Brodin P."/>
            <person name="Brown E.J."/>
            <person name="Cox J.S."/>
            <person name="Derbyshire K."/>
            <person name="Fortune S.M."/>
            <person name="Gao L.Y."/>
            <person name="Liu J."/>
            <person name="Gey van Pittius N.C."/>
            <person name="Pym A.S."/>
            <person name="Rubin E.J."/>
            <person name="Sherman D.R."/>
            <person name="Cole S.T."/>
            <person name="Brosch R."/>
        </authorList>
    </citation>
    <scope>GENE NAME</scope>
</reference>
<reference key="3">
    <citation type="journal article" date="2010" name="J. Bacteriol.">
        <title>Conservation of structure and protein-protein interactions mediated by the secreted mycobacterial proteins EsxA, EsxB, and EspA.</title>
        <authorList>
            <person name="Callahan B."/>
            <person name="Nguyen K."/>
            <person name="Collins A."/>
            <person name="Valdes K."/>
            <person name="Caplow M."/>
            <person name="Crossman D.K."/>
            <person name="Steyn A.J."/>
            <person name="Eisele L."/>
            <person name="Derbyshire K.M."/>
        </authorList>
    </citation>
    <scope>SUBUNIT</scope>
    <source>
        <strain>ATCC 25618 / H37Rv</strain>
    </source>
</reference>
<reference key="4">
    <citation type="journal article" date="2011" name="Mol. Cell. Proteomics">
        <title>Proteogenomic analysis of Mycobacterium tuberculosis by high resolution mass spectrometry.</title>
        <authorList>
            <person name="Kelkar D.S."/>
            <person name="Kumar D."/>
            <person name="Kumar P."/>
            <person name="Balakrishnan L."/>
            <person name="Muthusamy B."/>
            <person name="Yadav A.K."/>
            <person name="Shrivastava P."/>
            <person name="Marimuthu A."/>
            <person name="Anand S."/>
            <person name="Sundaram H."/>
            <person name="Kingsbury R."/>
            <person name="Harsha H.C."/>
            <person name="Nair B."/>
            <person name="Prasad T.S."/>
            <person name="Chauhan D.S."/>
            <person name="Katoch K."/>
            <person name="Katoch V.M."/>
            <person name="Kumar P."/>
            <person name="Chaerkady R."/>
            <person name="Ramachandran S."/>
            <person name="Dash D."/>
            <person name="Pandey A."/>
        </authorList>
    </citation>
    <scope>IDENTIFICATION BY MASS SPECTROMETRY [LARGE SCALE ANALYSIS]</scope>
    <source>
        <strain>ATCC 25618 / H37Rv</strain>
    </source>
</reference>
<proteinExistence type="evidence at protein level"/>
<evidence type="ECO:0000250" key="1"/>
<evidence type="ECO:0000255" key="2"/>
<evidence type="ECO:0000269" key="3">
    <source>
    </source>
</evidence>
<evidence type="ECO:0000305" key="4"/>
<comment type="function">
    <text evidence="1">Shows ATPase activity. Could provide energy for export of ESX-2 substrates (By similarity).</text>
</comment>
<comment type="subunit">
    <text evidence="1 3">Part of the ESX-2 / type VII secretion system (T7SS), which is composed of cytosolic and membrane components (By similarity). Residues 522-619 interact with an artificial EsxB-EsxA heterodimer from the adjacent ESX-1 locus (PubMed:19854905).</text>
</comment>
<comment type="subcellular location">
    <subcellularLocation>
        <location evidence="4">Cytoplasm</location>
    </subcellularLocation>
</comment>
<comment type="similarity">
    <text evidence="4">Belongs to the CbxX/CfxQ family.</text>
</comment>
<sequence length="619" mass="68041">MSRMVDTMGDLLTARRHFDRAMTIKNGQGCVAALPEFVAATEADPSMADAWLGRIACGDRDLASLKQLNAHSEWLHRETTRIGRTLAAEVQLGPSIGITVTDASQVGLALSSALTIAGEYAKADALLANRELLDSWRNYQWHQLARAFLMYVTQRWPDVLSTAAEDLPPQAIVMPAVTASICALAAHAAAHLGQGRVALDWLDRVDVIGHSRSSERFGADVLTAAIGPADIPLLVADLAYVRGMVYRQLHEEDKAQIWLSKATINGVLTDAAKEALADPNLRLIVTDERTIASRSDRWDASTAKSRDQLDDDNAAQRRGELLAEGRELLAKQVGLAAVKQAVSALEDQLEVRMMRLEHGLPVEGQTNHMLLVGPPGTGKTTTAEALGKIYAGMGIVRHPEIREVRRSDFCGHYIGESGPKTNELIEKSLGRIIFMDEFYSLIERHQDGTPDMIGMEAVNQLLVQLETHRFDFCFIGAGYEDQVDEFLTVNPGLAGRFNRKLRFESYSPVEIVEIGHRYATPRASQLDDAAREVFLDAVTTIRNYTTPSGQHGIDAMQNGRFARNVIERAEGFRDTRVVAQKRAGQPVSVQDLQIITATDIDAAIRSVCSDNRDMAAIVW</sequence>
<name>ECCA2_MYCTU</name>
<gene>
    <name type="primary">eccA2</name>
    <name type="ordered locus">Rv3884c</name>
    <name type="ORF">MTCY15F10.28</name>
</gene>
<organism>
    <name type="scientific">Mycobacterium tuberculosis (strain ATCC 25618 / H37Rv)</name>
    <dbReference type="NCBI Taxonomy" id="83332"/>
    <lineage>
        <taxon>Bacteria</taxon>
        <taxon>Bacillati</taxon>
        <taxon>Actinomycetota</taxon>
        <taxon>Actinomycetes</taxon>
        <taxon>Mycobacteriales</taxon>
        <taxon>Mycobacteriaceae</taxon>
        <taxon>Mycobacterium</taxon>
        <taxon>Mycobacterium tuberculosis complex</taxon>
    </lineage>
</organism>